<organism>
    <name type="scientific">Escherichia coli (strain K12)</name>
    <dbReference type="NCBI Taxonomy" id="83333"/>
    <lineage>
        <taxon>Bacteria</taxon>
        <taxon>Pseudomonadati</taxon>
        <taxon>Pseudomonadota</taxon>
        <taxon>Gammaproteobacteria</taxon>
        <taxon>Enterobacterales</taxon>
        <taxon>Enterobacteriaceae</taxon>
        <taxon>Escherichia</taxon>
    </lineage>
</organism>
<keyword id="KW-0002">3D-structure</keyword>
<keyword id="KW-0456">Lyase</keyword>
<keyword id="KW-0521">NADP</keyword>
<keyword id="KW-1185">Reference proteome</keyword>
<name>GM4D_ECOLI</name>
<dbReference type="EC" id="4.2.1.47" evidence="1"/>
<dbReference type="EMBL" id="U38473">
    <property type="protein sequence ID" value="AAC77842.1"/>
    <property type="molecule type" value="Genomic_DNA"/>
</dbReference>
<dbReference type="EMBL" id="U00096">
    <property type="protein sequence ID" value="AAC75114.1"/>
    <property type="molecule type" value="Genomic_DNA"/>
</dbReference>
<dbReference type="EMBL" id="AP009048">
    <property type="protein sequence ID" value="BAA15909.1"/>
    <property type="molecule type" value="Genomic_DNA"/>
</dbReference>
<dbReference type="PIR" id="D64971">
    <property type="entry name" value="D64971"/>
</dbReference>
<dbReference type="RefSeq" id="NP_416557.1">
    <property type="nucleotide sequence ID" value="NC_000913.3"/>
</dbReference>
<dbReference type="RefSeq" id="WP_000048190.1">
    <property type="nucleotide sequence ID" value="NZ_STEB01000002.1"/>
</dbReference>
<dbReference type="PDB" id="1DB3">
    <property type="method" value="X-ray"/>
    <property type="resolution" value="2.30 A"/>
    <property type="chains" value="A=2-373"/>
</dbReference>
<dbReference type="PDBsum" id="1DB3"/>
<dbReference type="SMR" id="P0AC88"/>
<dbReference type="BioGRID" id="4259690">
    <property type="interactions" value="195"/>
</dbReference>
<dbReference type="DIP" id="DIP-48216N"/>
<dbReference type="FunCoup" id="P0AC88">
    <property type="interactions" value="540"/>
</dbReference>
<dbReference type="IntAct" id="P0AC88">
    <property type="interactions" value="2"/>
</dbReference>
<dbReference type="STRING" id="511145.b2053"/>
<dbReference type="PaxDb" id="511145-b2053"/>
<dbReference type="EnsemblBacteria" id="AAC75114">
    <property type="protein sequence ID" value="AAC75114"/>
    <property type="gene ID" value="b2053"/>
</dbReference>
<dbReference type="GeneID" id="93775138"/>
<dbReference type="GeneID" id="946562"/>
<dbReference type="KEGG" id="ecj:JW2038"/>
<dbReference type="KEGG" id="eco:b2053"/>
<dbReference type="KEGG" id="ecoc:C3026_11555"/>
<dbReference type="PATRIC" id="fig|1411691.4.peg.198"/>
<dbReference type="EchoBASE" id="EB1735"/>
<dbReference type="eggNOG" id="COG1089">
    <property type="taxonomic scope" value="Bacteria"/>
</dbReference>
<dbReference type="HOGENOM" id="CLU_007383_14_0_6"/>
<dbReference type="InParanoid" id="P0AC88"/>
<dbReference type="OMA" id="HWQTVNY"/>
<dbReference type="OrthoDB" id="9779041at2"/>
<dbReference type="PhylomeDB" id="P0AC88"/>
<dbReference type="BioCyc" id="EcoCyc:GDPMANDEHYDRA-MONOMER"/>
<dbReference type="BioCyc" id="MetaCyc:GDPMANDEHYDRA-MONOMER"/>
<dbReference type="SABIO-RK" id="P0AC88"/>
<dbReference type="UniPathway" id="UPA00128">
    <property type="reaction ID" value="UER00190"/>
</dbReference>
<dbReference type="UniPathway" id="UPA00980"/>
<dbReference type="EvolutionaryTrace" id="P0AC88"/>
<dbReference type="PRO" id="PR:P0AC88"/>
<dbReference type="Proteomes" id="UP000000625">
    <property type="component" value="Chromosome"/>
</dbReference>
<dbReference type="GO" id="GO:0008446">
    <property type="term" value="F:GDP-mannose 4,6-dehydratase activity"/>
    <property type="evidence" value="ECO:0000314"/>
    <property type="project" value="EcoCyc"/>
</dbReference>
<dbReference type="GO" id="GO:0070401">
    <property type="term" value="F:NADP+ binding"/>
    <property type="evidence" value="ECO:0007669"/>
    <property type="project" value="UniProtKB-UniRule"/>
</dbReference>
<dbReference type="GO" id="GO:0042803">
    <property type="term" value="F:protein homodimerization activity"/>
    <property type="evidence" value="ECO:0000314"/>
    <property type="project" value="EcoCyc"/>
</dbReference>
<dbReference type="GO" id="GO:0042351">
    <property type="term" value="P:'de novo' GDP-L-fucose biosynthetic process"/>
    <property type="evidence" value="ECO:0000318"/>
    <property type="project" value="GO_Central"/>
</dbReference>
<dbReference type="GO" id="GO:0009242">
    <property type="term" value="P:colanic acid biosynthetic process"/>
    <property type="evidence" value="ECO:0007669"/>
    <property type="project" value="UniProtKB-UniPathway"/>
</dbReference>
<dbReference type="CDD" id="cd05260">
    <property type="entry name" value="GDP_MD_SDR_e"/>
    <property type="match status" value="1"/>
</dbReference>
<dbReference type="FunFam" id="3.40.50.720:FF:000924">
    <property type="entry name" value="GDP-mannose 4,6 dehydratase"/>
    <property type="match status" value="1"/>
</dbReference>
<dbReference type="Gene3D" id="3.40.50.720">
    <property type="entry name" value="NAD(P)-binding Rossmann-like Domain"/>
    <property type="match status" value="1"/>
</dbReference>
<dbReference type="Gene3D" id="3.90.25.10">
    <property type="entry name" value="UDP-galactose 4-epimerase, domain 1"/>
    <property type="match status" value="1"/>
</dbReference>
<dbReference type="HAMAP" id="MF_00955">
    <property type="entry name" value="GDP_Man_dehydratase"/>
    <property type="match status" value="1"/>
</dbReference>
<dbReference type="InterPro" id="IPR006368">
    <property type="entry name" value="GDP_Man_deHydtase"/>
</dbReference>
<dbReference type="InterPro" id="IPR016040">
    <property type="entry name" value="NAD(P)-bd_dom"/>
</dbReference>
<dbReference type="InterPro" id="IPR036291">
    <property type="entry name" value="NAD(P)-bd_dom_sf"/>
</dbReference>
<dbReference type="NCBIfam" id="TIGR01472">
    <property type="entry name" value="gmd"/>
    <property type="match status" value="1"/>
</dbReference>
<dbReference type="PANTHER" id="PTHR43715:SF1">
    <property type="entry name" value="GDP-MANNOSE 4,6 DEHYDRATASE"/>
    <property type="match status" value="1"/>
</dbReference>
<dbReference type="PANTHER" id="PTHR43715">
    <property type="entry name" value="GDP-MANNOSE 4,6-DEHYDRATASE"/>
    <property type="match status" value="1"/>
</dbReference>
<dbReference type="Pfam" id="PF16363">
    <property type="entry name" value="GDP_Man_Dehyd"/>
    <property type="match status" value="1"/>
</dbReference>
<dbReference type="SUPFAM" id="SSF51735">
    <property type="entry name" value="NAD(P)-binding Rossmann-fold domains"/>
    <property type="match status" value="1"/>
</dbReference>
<evidence type="ECO:0000255" key="1">
    <source>
        <dbReference type="HAMAP-Rule" id="MF_00955"/>
    </source>
</evidence>
<evidence type="ECO:0000269" key="2">
    <source>
    </source>
</evidence>
<evidence type="ECO:0000269" key="3">
    <source>
    </source>
</evidence>
<evidence type="ECO:0000305" key="4"/>
<evidence type="ECO:0000305" key="5">
    <source>
    </source>
</evidence>
<evidence type="ECO:0007829" key="6">
    <source>
        <dbReference type="PDB" id="1DB3"/>
    </source>
</evidence>
<accession>P0AC88</accession>
<accession>P32054</accession>
<accession>P77687</accession>
<gene>
    <name evidence="1" type="primary">gmd</name>
    <name type="synonym">yefA</name>
    <name type="synonym">yefN</name>
    <name type="ordered locus">b2053</name>
    <name type="ordered locus">JW2038</name>
</gene>
<comment type="function">
    <text evidence="1 3">Catalyzes the conversion of GDP-D-mannose to GDP-4-dehydro-6-deoxy-D-mannose.</text>
</comment>
<comment type="catalytic activity">
    <reaction evidence="1 3">
        <text>GDP-alpha-D-mannose = GDP-4-dehydro-alpha-D-rhamnose + H2O</text>
        <dbReference type="Rhea" id="RHEA:23820"/>
        <dbReference type="ChEBI" id="CHEBI:15377"/>
        <dbReference type="ChEBI" id="CHEBI:57527"/>
        <dbReference type="ChEBI" id="CHEBI:57964"/>
        <dbReference type="EC" id="4.2.1.47"/>
    </reaction>
</comment>
<comment type="cofactor">
    <cofactor evidence="1 2 3">
        <name>NADP(+)</name>
        <dbReference type="ChEBI" id="CHEBI:58349"/>
    </cofactor>
</comment>
<comment type="pathway">
    <text evidence="3">Nucleotide-sugar biosynthesis; GDP-L-fucose biosynthesis via de novo pathway; GDP-L-fucose from GDP-alpha-D-mannose: step 1/2.</text>
</comment>
<comment type="pathway">
    <text evidence="3">Exopolysaccharide biosynthesis; colanic acid biosynthesis.</text>
</comment>
<comment type="subunit">
    <text evidence="2">Homodimer.</text>
</comment>
<comment type="similarity">
    <text evidence="1">Belongs to the NAD(P)-dependent epimerase/dehydratase family. GDP-mannose 4,6-dehydratase subfamily.</text>
</comment>
<reference key="1">
    <citation type="journal article" date="1996" name="J. Bacteriol.">
        <title>Organization of the Escherichia coli K-12 gene cluster responsible for production of the extracellular polysaccharide colanic acid.</title>
        <authorList>
            <person name="Stevenson G."/>
            <person name="Andrianopoulos K."/>
            <person name="Hobbs M."/>
            <person name="Reeves P.R."/>
        </authorList>
    </citation>
    <scope>NUCLEOTIDE SEQUENCE [GENOMIC DNA]</scope>
    <source>
        <strain>K12</strain>
    </source>
</reference>
<reference key="2">
    <citation type="journal article" date="1996" name="DNA Res.">
        <title>A 460-kb DNA sequence of the Escherichia coli K-12 genome corresponding to the 40.1-50.0 min region on the linkage map.</title>
        <authorList>
            <person name="Itoh T."/>
            <person name="Aiba H."/>
            <person name="Baba T."/>
            <person name="Fujita K."/>
            <person name="Hayashi K."/>
            <person name="Inada T."/>
            <person name="Isono K."/>
            <person name="Kasai H."/>
            <person name="Kimura S."/>
            <person name="Kitakawa M."/>
            <person name="Kitagawa M."/>
            <person name="Makino K."/>
            <person name="Miki T."/>
            <person name="Mizobuchi K."/>
            <person name="Mori H."/>
            <person name="Mori T."/>
            <person name="Motomura K."/>
            <person name="Nakade S."/>
            <person name="Nakamura Y."/>
            <person name="Nashimoto H."/>
            <person name="Nishio Y."/>
            <person name="Oshima T."/>
            <person name="Saito N."/>
            <person name="Sampei G."/>
            <person name="Seki Y."/>
            <person name="Sivasundaram S."/>
            <person name="Tagami H."/>
            <person name="Takeda J."/>
            <person name="Takemoto K."/>
            <person name="Wada C."/>
            <person name="Yamamoto Y."/>
            <person name="Horiuchi T."/>
        </authorList>
    </citation>
    <scope>NUCLEOTIDE SEQUENCE [LARGE SCALE GENOMIC DNA]</scope>
    <source>
        <strain>K12 / W3110 / ATCC 27325 / DSM 5911</strain>
    </source>
</reference>
<reference key="3">
    <citation type="journal article" date="1997" name="Science">
        <title>The complete genome sequence of Escherichia coli K-12.</title>
        <authorList>
            <person name="Blattner F.R."/>
            <person name="Plunkett G. III"/>
            <person name="Bloch C.A."/>
            <person name="Perna N.T."/>
            <person name="Burland V."/>
            <person name="Riley M."/>
            <person name="Collado-Vides J."/>
            <person name="Glasner J.D."/>
            <person name="Rode C.K."/>
            <person name="Mayhew G.F."/>
            <person name="Gregor J."/>
            <person name="Davis N.W."/>
            <person name="Kirkpatrick H.A."/>
            <person name="Goeden M.A."/>
            <person name="Rose D.J."/>
            <person name="Mau B."/>
            <person name="Shao Y."/>
        </authorList>
    </citation>
    <scope>NUCLEOTIDE SEQUENCE [LARGE SCALE GENOMIC DNA]</scope>
    <source>
        <strain>K12 / MG1655 / ATCC 47076</strain>
    </source>
</reference>
<reference key="4">
    <citation type="journal article" date="2006" name="Mol. Syst. Biol.">
        <title>Highly accurate genome sequences of Escherichia coli K-12 strains MG1655 and W3110.</title>
        <authorList>
            <person name="Hayashi K."/>
            <person name="Morooka N."/>
            <person name="Yamamoto Y."/>
            <person name="Fujita K."/>
            <person name="Isono K."/>
            <person name="Choi S."/>
            <person name="Ohtsubo E."/>
            <person name="Baba T."/>
            <person name="Wanner B.L."/>
            <person name="Mori H."/>
            <person name="Horiuchi T."/>
        </authorList>
    </citation>
    <scope>NUCLEOTIDE SEQUENCE [LARGE SCALE GENOMIC DNA]</scope>
    <source>
        <strain>K12 / W3110 / ATCC 27325 / DSM 5911</strain>
    </source>
</reference>
<reference key="5">
    <citation type="journal article" date="1994" name="Mol. Biol. Evol.">
        <title>Evidence for effect of random genetic drift on G+C content after lateral transfer of fucose pathway genes to Escherichia coli K-12.</title>
        <authorList>
            <person name="Aoyama K."/>
            <person name="Haase A.M."/>
            <person name="Reeves P.R."/>
        </authorList>
    </citation>
    <scope>NUCLEOTIDE SEQUENCE [GENOMIC DNA] OF 50-373</scope>
    <source>
        <strain>K12</strain>
    </source>
</reference>
<reference key="6">
    <citation type="journal article" date="1997" name="FEBS Lett.">
        <title>Expression, purification and characterization of GDP-D-mannose 4,6-dehydratase from Escherichia coli.</title>
        <authorList>
            <person name="Sturla L."/>
            <person name="Bisso A."/>
            <person name="Zanardi D."/>
            <person name="Benatti U."/>
            <person name="de Flora A."/>
            <person name="Tonetti M."/>
        </authorList>
    </citation>
    <scope>FUNCTION</scope>
    <scope>CATALYTIC ACTIVITY</scope>
    <scope>COFACTOR</scope>
    <scope>PATHWAY</scope>
</reference>
<reference key="7">
    <citation type="journal article" date="2000" name="Structure">
        <title>Structural and kinetic analysis of Escherichia coli GDP-mannose 4,6 dehydratase provides insights into the enzyme's catalytic mechanism and regulation by GDP-fucose.</title>
        <authorList>
            <person name="Somoza J.R."/>
            <person name="Menon S."/>
            <person name="Schmidt H."/>
            <person name="Joseph-McCarthy D."/>
            <person name="Dessen A."/>
            <person name="Stahl M.L."/>
            <person name="Somers W.S."/>
            <person name="Sullivan F.X."/>
        </authorList>
    </citation>
    <scope>X-RAY CRYSTALLOGRAPHY (2.3 ANGSTROMS)</scope>
    <scope>COFACTOR</scope>
    <scope>SUBUNIT</scope>
    <scope>MUTAGENESIS OF THR-133; GLU-135; TYR-157 AND LYS-161</scope>
    <scope>ACTIVE SITE</scope>
</reference>
<sequence length="373" mass="42047">MSKVALITGVTGQDGSYLAEFLLEKGYEVHGIKRRASSFNTERVDHIYQDPHTCNPKFHLHYGDLSDTSNLTRILREVQPDEVYNLGAMSHVAVSFESPEYTADVDAMGTLRLLEAIRFLGLEKKTRFYQASTSELYGLVQEIPQKETTPFYPRSPYAVAKLYAYWITVNYRESYGMYACNGILFNHESPRRGETFVTRKITRAIANIAQGLESCLYLGNMDSLRDWGHAKDYVKMQWMMLQQEQPEDFVIATGVQYSVRQFVEMAAAQLGIKLRFEGTGVEEKGIVVSVTGHDAPGVKPGDVIIAVDPRYFRPAEVETLLGDPTKAHEKLGWKPEITLREMVSEMVANDLEAAKKHSLLKSHGYDVAIALES</sequence>
<proteinExistence type="evidence at protein level"/>
<feature type="chain" id="PRO_0000201712" description="GDP-mannose 4,6-dehydratase">
    <location>
        <begin position="1"/>
        <end position="373"/>
    </location>
</feature>
<feature type="active site" evidence="5">
    <location>
        <position position="133"/>
    </location>
</feature>
<feature type="active site" description="Nucleophile" evidence="5">
    <location>
        <position position="135"/>
    </location>
</feature>
<feature type="active site" description="Nucleophile" evidence="5">
    <location>
        <position position="157"/>
    </location>
</feature>
<feature type="binding site" evidence="1">
    <location>
        <begin position="9"/>
        <end position="14"/>
    </location>
    <ligand>
        <name>NADP(+)</name>
        <dbReference type="ChEBI" id="CHEBI:58349"/>
    </ligand>
</feature>
<feature type="binding site" evidence="1">
    <location>
        <begin position="64"/>
        <end position="65"/>
    </location>
    <ligand>
        <name>NADP(+)</name>
        <dbReference type="ChEBI" id="CHEBI:58349"/>
    </ligand>
</feature>
<feature type="binding site" evidence="1">
    <location>
        <begin position="86"/>
        <end position="90"/>
    </location>
    <ligand>
        <name>NADP(+)</name>
        <dbReference type="ChEBI" id="CHEBI:58349"/>
    </ligand>
</feature>
<feature type="binding site" evidence="1">
    <location>
        <position position="101"/>
    </location>
    <ligand>
        <name>NADP(+)</name>
        <dbReference type="ChEBI" id="CHEBI:58349"/>
    </ligand>
</feature>
<feature type="binding site" evidence="4">
    <location>
        <position position="161"/>
    </location>
    <ligand>
        <name>NADP(+)</name>
        <dbReference type="ChEBI" id="CHEBI:58349"/>
    </ligand>
</feature>
<feature type="binding site" evidence="1">
    <location>
        <position position="187"/>
    </location>
    <ligand>
        <name>NADP(+)</name>
        <dbReference type="ChEBI" id="CHEBI:58349"/>
    </ligand>
</feature>
<feature type="binding site" evidence="1">
    <location>
        <position position="192"/>
    </location>
    <ligand>
        <name>NADP(+)</name>
        <dbReference type="ChEBI" id="CHEBI:58349"/>
    </ligand>
</feature>
<feature type="mutagenesis site" description="Strongly reduces activity." evidence="2">
    <original>T</original>
    <variation>V</variation>
    <location>
        <position position="133"/>
    </location>
</feature>
<feature type="mutagenesis site" description="Strongly reduces activity." evidence="2">
    <original>E</original>
    <variation>Q</variation>
    <location>
        <position position="135"/>
    </location>
</feature>
<feature type="mutagenesis site" description="Strongly reduces activity." evidence="2">
    <original>Y</original>
    <variation>F</variation>
    <location>
        <position position="157"/>
    </location>
</feature>
<feature type="mutagenesis site" description="Strongly reduces activity." evidence="2">
    <original>K</original>
    <variation>A</variation>
    <location>
        <position position="161"/>
    </location>
</feature>
<feature type="strand" evidence="6">
    <location>
        <begin position="4"/>
        <end position="8"/>
    </location>
</feature>
<feature type="turn" evidence="6">
    <location>
        <begin position="9"/>
        <end position="11"/>
    </location>
</feature>
<feature type="helix" evidence="6">
    <location>
        <begin position="13"/>
        <end position="24"/>
    </location>
</feature>
<feature type="strand" evidence="6">
    <location>
        <begin position="28"/>
        <end position="32"/>
    </location>
</feature>
<feature type="strand" evidence="6">
    <location>
        <begin position="58"/>
        <end position="60"/>
    </location>
</feature>
<feature type="helix" evidence="6">
    <location>
        <begin position="68"/>
        <end position="78"/>
    </location>
</feature>
<feature type="strand" evidence="6">
    <location>
        <begin position="81"/>
        <end position="85"/>
    </location>
</feature>
<feature type="turn" evidence="6">
    <location>
        <begin position="91"/>
        <end position="96"/>
    </location>
</feature>
<feature type="helix" evidence="6">
    <location>
        <begin position="99"/>
        <end position="106"/>
    </location>
</feature>
<feature type="helix" evidence="6">
    <location>
        <begin position="108"/>
        <end position="119"/>
    </location>
</feature>
<feature type="turn" evidence="6">
    <location>
        <begin position="123"/>
        <end position="125"/>
    </location>
</feature>
<feature type="strand" evidence="6">
    <location>
        <begin position="127"/>
        <end position="133"/>
    </location>
</feature>
<feature type="helix" evidence="6">
    <location>
        <begin position="134"/>
        <end position="137"/>
    </location>
</feature>
<feature type="strand" evidence="6">
    <location>
        <begin position="142"/>
        <end position="145"/>
    </location>
</feature>
<feature type="helix" evidence="6">
    <location>
        <begin position="156"/>
        <end position="175"/>
    </location>
</feature>
<feature type="strand" evidence="6">
    <location>
        <begin position="179"/>
        <end position="184"/>
    </location>
</feature>
<feature type="helix" evidence="6">
    <location>
        <begin position="197"/>
        <end position="209"/>
    </location>
</feature>
<feature type="strand" evidence="6">
    <location>
        <begin position="216"/>
        <end position="219"/>
    </location>
</feature>
<feature type="helix" evidence="6">
    <location>
        <begin position="230"/>
        <end position="239"/>
    </location>
</feature>
<feature type="strand" evidence="6">
    <location>
        <begin position="242"/>
        <end position="245"/>
    </location>
</feature>
<feature type="strand" evidence="6">
    <location>
        <begin position="249"/>
        <end position="251"/>
    </location>
</feature>
<feature type="helix" evidence="6">
    <location>
        <begin position="259"/>
        <end position="268"/>
    </location>
</feature>
<feature type="turn" evidence="6">
    <location>
        <begin position="269"/>
        <end position="271"/>
    </location>
</feature>
<feature type="strand" evidence="6">
    <location>
        <begin position="272"/>
        <end position="278"/>
    </location>
</feature>
<feature type="helix" evidence="6">
    <location>
        <begin position="280"/>
        <end position="282"/>
    </location>
</feature>
<feature type="strand" evidence="6">
    <location>
        <begin position="284"/>
        <end position="290"/>
    </location>
</feature>
<feature type="strand" evidence="6">
    <location>
        <begin position="292"/>
        <end position="294"/>
    </location>
</feature>
<feature type="strand" evidence="6">
    <location>
        <begin position="303"/>
        <end position="307"/>
    </location>
</feature>
<feature type="helix" evidence="6">
    <location>
        <begin position="309"/>
        <end position="311"/>
    </location>
</feature>
<feature type="helix" evidence="6">
    <location>
        <begin position="325"/>
        <end position="331"/>
    </location>
</feature>
<feature type="helix" evidence="6">
    <location>
        <begin position="339"/>
        <end position="355"/>
    </location>
</feature>
<protein>
    <recommendedName>
        <fullName evidence="1">GDP-mannose 4,6-dehydratase</fullName>
        <ecNumber evidence="1">4.2.1.47</ecNumber>
    </recommendedName>
    <alternativeName>
        <fullName evidence="1">GDP-D-mannose dehydratase</fullName>
    </alternativeName>
</protein>